<feature type="chain" id="PRO_1000192701" description="Probable cytosol aminopeptidase">
    <location>
        <begin position="1"/>
        <end position="498"/>
    </location>
</feature>
<feature type="active site" evidence="1">
    <location>
        <position position="276"/>
    </location>
</feature>
<feature type="active site" evidence="1">
    <location>
        <position position="350"/>
    </location>
</feature>
<feature type="binding site" evidence="1">
    <location>
        <position position="264"/>
    </location>
    <ligand>
        <name>Mn(2+)</name>
        <dbReference type="ChEBI" id="CHEBI:29035"/>
        <label>2</label>
    </ligand>
</feature>
<feature type="binding site" evidence="1">
    <location>
        <position position="269"/>
    </location>
    <ligand>
        <name>Mn(2+)</name>
        <dbReference type="ChEBI" id="CHEBI:29035"/>
        <label>1</label>
    </ligand>
</feature>
<feature type="binding site" evidence="1">
    <location>
        <position position="269"/>
    </location>
    <ligand>
        <name>Mn(2+)</name>
        <dbReference type="ChEBI" id="CHEBI:29035"/>
        <label>2</label>
    </ligand>
</feature>
<feature type="binding site" evidence="1">
    <location>
        <position position="287"/>
    </location>
    <ligand>
        <name>Mn(2+)</name>
        <dbReference type="ChEBI" id="CHEBI:29035"/>
        <label>2</label>
    </ligand>
</feature>
<feature type="binding site" evidence="1">
    <location>
        <position position="346"/>
    </location>
    <ligand>
        <name>Mn(2+)</name>
        <dbReference type="ChEBI" id="CHEBI:29035"/>
        <label>1</label>
    </ligand>
</feature>
<feature type="binding site" evidence="1">
    <location>
        <position position="348"/>
    </location>
    <ligand>
        <name>Mn(2+)</name>
        <dbReference type="ChEBI" id="CHEBI:29035"/>
        <label>1</label>
    </ligand>
</feature>
<feature type="binding site" evidence="1">
    <location>
        <position position="348"/>
    </location>
    <ligand>
        <name>Mn(2+)</name>
        <dbReference type="ChEBI" id="CHEBI:29035"/>
        <label>2</label>
    </ligand>
</feature>
<dbReference type="EC" id="3.4.11.1" evidence="1"/>
<dbReference type="EC" id="3.4.11.10" evidence="1"/>
<dbReference type="EMBL" id="CP000628">
    <property type="protein sequence ID" value="ACM26059.1"/>
    <property type="molecule type" value="Genomic_DNA"/>
</dbReference>
<dbReference type="RefSeq" id="WP_007702533.1">
    <property type="nucleotide sequence ID" value="NC_011985.1"/>
</dbReference>
<dbReference type="SMR" id="B9JCD8"/>
<dbReference type="STRING" id="311403.Arad_1686"/>
<dbReference type="KEGG" id="ara:Arad_1686"/>
<dbReference type="eggNOG" id="COG0260">
    <property type="taxonomic scope" value="Bacteria"/>
</dbReference>
<dbReference type="HOGENOM" id="CLU_013734_6_0_5"/>
<dbReference type="Proteomes" id="UP000001600">
    <property type="component" value="Chromosome 1"/>
</dbReference>
<dbReference type="GO" id="GO:0005737">
    <property type="term" value="C:cytoplasm"/>
    <property type="evidence" value="ECO:0007669"/>
    <property type="project" value="UniProtKB-SubCell"/>
</dbReference>
<dbReference type="GO" id="GO:0030145">
    <property type="term" value="F:manganese ion binding"/>
    <property type="evidence" value="ECO:0007669"/>
    <property type="project" value="UniProtKB-UniRule"/>
</dbReference>
<dbReference type="GO" id="GO:0070006">
    <property type="term" value="F:metalloaminopeptidase activity"/>
    <property type="evidence" value="ECO:0007669"/>
    <property type="project" value="InterPro"/>
</dbReference>
<dbReference type="GO" id="GO:0006508">
    <property type="term" value="P:proteolysis"/>
    <property type="evidence" value="ECO:0007669"/>
    <property type="project" value="UniProtKB-KW"/>
</dbReference>
<dbReference type="CDD" id="cd00433">
    <property type="entry name" value="Peptidase_M17"/>
    <property type="match status" value="1"/>
</dbReference>
<dbReference type="Gene3D" id="3.40.220.10">
    <property type="entry name" value="Leucine Aminopeptidase, subunit E, domain 1"/>
    <property type="match status" value="1"/>
</dbReference>
<dbReference type="Gene3D" id="3.40.630.10">
    <property type="entry name" value="Zn peptidases"/>
    <property type="match status" value="1"/>
</dbReference>
<dbReference type="HAMAP" id="MF_00181">
    <property type="entry name" value="Cytosol_peptidase_M17"/>
    <property type="match status" value="1"/>
</dbReference>
<dbReference type="InterPro" id="IPR011356">
    <property type="entry name" value="Leucine_aapep/pepB"/>
</dbReference>
<dbReference type="InterPro" id="IPR043472">
    <property type="entry name" value="Macro_dom-like"/>
</dbReference>
<dbReference type="InterPro" id="IPR000819">
    <property type="entry name" value="Peptidase_M17_C"/>
</dbReference>
<dbReference type="InterPro" id="IPR023042">
    <property type="entry name" value="Peptidase_M17_leu_NH2_pept"/>
</dbReference>
<dbReference type="InterPro" id="IPR008283">
    <property type="entry name" value="Peptidase_M17_N"/>
</dbReference>
<dbReference type="NCBIfam" id="NF002073">
    <property type="entry name" value="PRK00913.1-2"/>
    <property type="match status" value="1"/>
</dbReference>
<dbReference type="NCBIfam" id="NF002074">
    <property type="entry name" value="PRK00913.1-4"/>
    <property type="match status" value="1"/>
</dbReference>
<dbReference type="NCBIfam" id="NF002075">
    <property type="entry name" value="PRK00913.2-2"/>
    <property type="match status" value="1"/>
</dbReference>
<dbReference type="NCBIfam" id="NF002077">
    <property type="entry name" value="PRK00913.2-4"/>
    <property type="match status" value="1"/>
</dbReference>
<dbReference type="NCBIfam" id="NF002083">
    <property type="entry name" value="PRK00913.3-5"/>
    <property type="match status" value="1"/>
</dbReference>
<dbReference type="PANTHER" id="PTHR11963:SF23">
    <property type="entry name" value="CYTOSOL AMINOPEPTIDASE"/>
    <property type="match status" value="1"/>
</dbReference>
<dbReference type="PANTHER" id="PTHR11963">
    <property type="entry name" value="LEUCINE AMINOPEPTIDASE-RELATED"/>
    <property type="match status" value="1"/>
</dbReference>
<dbReference type="Pfam" id="PF00883">
    <property type="entry name" value="Peptidase_M17"/>
    <property type="match status" value="1"/>
</dbReference>
<dbReference type="Pfam" id="PF02789">
    <property type="entry name" value="Peptidase_M17_N"/>
    <property type="match status" value="1"/>
</dbReference>
<dbReference type="PRINTS" id="PR00481">
    <property type="entry name" value="LAMNOPPTDASE"/>
</dbReference>
<dbReference type="SUPFAM" id="SSF52949">
    <property type="entry name" value="Macro domain-like"/>
    <property type="match status" value="1"/>
</dbReference>
<dbReference type="SUPFAM" id="SSF53187">
    <property type="entry name" value="Zn-dependent exopeptidases"/>
    <property type="match status" value="1"/>
</dbReference>
<dbReference type="PROSITE" id="PS00631">
    <property type="entry name" value="CYTOSOL_AP"/>
    <property type="match status" value="1"/>
</dbReference>
<protein>
    <recommendedName>
        <fullName evidence="1">Probable cytosol aminopeptidase</fullName>
        <ecNumber evidence="1">3.4.11.1</ecNumber>
    </recommendedName>
    <alternativeName>
        <fullName evidence="1">Leucine aminopeptidase</fullName>
        <shortName evidence="1">LAP</shortName>
        <ecNumber evidence="1">3.4.11.10</ecNumber>
    </alternativeName>
    <alternativeName>
        <fullName evidence="1">Leucyl aminopeptidase</fullName>
    </alternativeName>
</protein>
<keyword id="KW-0031">Aminopeptidase</keyword>
<keyword id="KW-0963">Cytoplasm</keyword>
<keyword id="KW-0378">Hydrolase</keyword>
<keyword id="KW-0464">Manganese</keyword>
<keyword id="KW-0479">Metal-binding</keyword>
<keyword id="KW-0645">Protease</keyword>
<accession>B9JCD8</accession>
<gene>
    <name evidence="1" type="primary">pepA</name>
    <name type="ordered locus">Arad_1686</name>
</gene>
<comment type="function">
    <text evidence="1">Presumably involved in the processing and regular turnover of intracellular proteins. Catalyzes the removal of unsubstituted N-terminal amino acids from various peptides.</text>
</comment>
<comment type="catalytic activity">
    <reaction evidence="1">
        <text>Release of an N-terminal amino acid, Xaa-|-Yaa-, in which Xaa is preferably Leu, but may be other amino acids including Pro although not Arg or Lys, and Yaa may be Pro. Amino acid amides and methyl esters are also readily hydrolyzed, but rates on arylamides are exceedingly low.</text>
        <dbReference type="EC" id="3.4.11.1"/>
    </reaction>
</comment>
<comment type="catalytic activity">
    <reaction evidence="1">
        <text>Release of an N-terminal amino acid, preferentially leucine, but not glutamic or aspartic acids.</text>
        <dbReference type="EC" id="3.4.11.10"/>
    </reaction>
</comment>
<comment type="cofactor">
    <cofactor evidence="1">
        <name>Mn(2+)</name>
        <dbReference type="ChEBI" id="CHEBI:29035"/>
    </cofactor>
    <text evidence="1">Binds 2 manganese ions per subunit.</text>
</comment>
<comment type="subcellular location">
    <subcellularLocation>
        <location evidence="1">Cytoplasm</location>
    </subcellularLocation>
</comment>
<comment type="similarity">
    <text evidence="1">Belongs to the peptidase M17 family.</text>
</comment>
<evidence type="ECO:0000255" key="1">
    <source>
        <dbReference type="HAMAP-Rule" id="MF_00181"/>
    </source>
</evidence>
<reference key="1">
    <citation type="journal article" date="2009" name="J. Bacteriol.">
        <title>Genome sequences of three Agrobacterium biovars help elucidate the evolution of multichromosome genomes in bacteria.</title>
        <authorList>
            <person name="Slater S.C."/>
            <person name="Goldman B.S."/>
            <person name="Goodner B."/>
            <person name="Setubal J.C."/>
            <person name="Farrand S.K."/>
            <person name="Nester E.W."/>
            <person name="Burr T.J."/>
            <person name="Banta L."/>
            <person name="Dickerman A.W."/>
            <person name="Paulsen I."/>
            <person name="Otten L."/>
            <person name="Suen G."/>
            <person name="Welch R."/>
            <person name="Almeida N.F."/>
            <person name="Arnold F."/>
            <person name="Burton O.T."/>
            <person name="Du Z."/>
            <person name="Ewing A."/>
            <person name="Godsy E."/>
            <person name="Heisel S."/>
            <person name="Houmiel K.L."/>
            <person name="Jhaveri J."/>
            <person name="Lu J."/>
            <person name="Miller N.M."/>
            <person name="Norton S."/>
            <person name="Chen Q."/>
            <person name="Phoolcharoen W."/>
            <person name="Ohlin V."/>
            <person name="Ondrusek D."/>
            <person name="Pride N."/>
            <person name="Stricklin S.L."/>
            <person name="Sun J."/>
            <person name="Wheeler C."/>
            <person name="Wilson L."/>
            <person name="Zhu H."/>
            <person name="Wood D.W."/>
        </authorList>
    </citation>
    <scope>NUCLEOTIDE SEQUENCE [LARGE SCALE GENOMIC DNA]</scope>
    <source>
        <strain>K84 / ATCC BAA-868</strain>
    </source>
</reference>
<organism>
    <name type="scientific">Rhizobium rhizogenes (strain K84 / ATCC BAA-868)</name>
    <name type="common">Agrobacterium radiobacter</name>
    <dbReference type="NCBI Taxonomy" id="311403"/>
    <lineage>
        <taxon>Bacteria</taxon>
        <taxon>Pseudomonadati</taxon>
        <taxon>Pseudomonadota</taxon>
        <taxon>Alphaproteobacteria</taxon>
        <taxon>Hyphomicrobiales</taxon>
        <taxon>Rhizobiaceae</taxon>
        <taxon>Rhizobium/Agrobacterium group</taxon>
        <taxon>Rhizobium</taxon>
    </lineage>
</organism>
<sequence length="498" mass="52652">MSVKFEISFAKTVRLNGGLAILLKDADSESPAGAAGADPANVFAKAARIARFTAKGLSSLDIVAPEGSPVDRIIVIGTGRAKELNAHDWLKLGGAAAARIRNVEKAAIFIDLPGVQAGGKAAADFALGMLLRAYSFDTYKTKKGDDDDKNGAQKPVKVTIVTPDVAAAKKLFAASEAIADGVILARDLVNEPPNVLGPVEFAAKAKALEKLGVEVEILTEREMRRLGMGALLGVAQGSVRPPRLVIMQWKGGKAKEKPVAFIGKGVVFDTGGISIKPAAGMEDMKGDMGGAAAVTGLMHTLAARGAKVNAIGVIGLVENMPDGNAQRPGDIVTSMSGQTIEIINTDAEGRLVLCDALWYTNDRFKPQFMINLATLTGAILVALGNLQAGLFSNDDQLANQLTAAGLVTNERLWRMPLGKDYDKMIDSKFADMKNTGGRYAGSITAAQFLKRFVQETPWAHLDIAGTAMGSTLDEINQSWGSGFGVRLLDELVRENYES</sequence>
<name>AMPA_RHIR8</name>
<proteinExistence type="inferred from homology"/>